<evidence type="ECO:0000250" key="1"/>
<evidence type="ECO:0000255" key="2">
    <source>
        <dbReference type="HAMAP-Rule" id="MF_00138"/>
    </source>
</evidence>
<sequence length="426" mass="47319">MKVLIVGSGGREHAIAWKISQNSKVDKIFAASGNAYNKVIKNCENINLKTSDDILNFAIKEKVDLTIVGSEELLVDGIVDKFQENNLTIFGPNKEAAMLEGSKAFAKDFMQKYGVKTAKYQSFIDKEKAIKYLDKISYPVVIKASGLAAGKGVVIAQNRKEAEETLNDMMTNKVFAAAGDTVVIEEFLDGVEISVLSITDSEVIIPFISAKDHKKISEKETGLNTGGMGVIAPNPYYTKTIEEKFIQNILNPTLKGIKAEKMNFVGIIFFGLMVANGEVYLLEYNMRMGDPETQAVLPLMKSDFLNVINSALNKDLKNIKIDWEDKSACCVVMAAGGYPVKYEKGNFISGLEKFDSNKSDNKIFFAGVKEENDKFYTNGGRVLNVVSIKDSLEKAIEEAYKNVKEISFKDNYYRKDIGTLYVPVKY</sequence>
<reference key="1">
    <citation type="journal article" date="2002" name="J. Bacteriol.">
        <title>Genome sequence and analysis of the oral bacterium Fusobacterium nucleatum strain ATCC 25586.</title>
        <authorList>
            <person name="Kapatral V."/>
            <person name="Anderson I."/>
            <person name="Ivanova N."/>
            <person name="Reznik G."/>
            <person name="Los T."/>
            <person name="Lykidis A."/>
            <person name="Bhattacharyya A."/>
            <person name="Bartman A."/>
            <person name="Gardner W."/>
            <person name="Grechkin G."/>
            <person name="Zhu L."/>
            <person name="Vasieva O."/>
            <person name="Chu L."/>
            <person name="Kogan Y."/>
            <person name="Chaga O."/>
            <person name="Goltsman E."/>
            <person name="Bernal A."/>
            <person name="Larsen N."/>
            <person name="D'Souza M."/>
            <person name="Walunas T."/>
            <person name="Pusch G."/>
            <person name="Haselkorn R."/>
            <person name="Fonstein M."/>
            <person name="Kyrpides N.C."/>
            <person name="Overbeek R."/>
        </authorList>
    </citation>
    <scope>NUCLEOTIDE SEQUENCE [LARGE SCALE GENOMIC DNA]</scope>
    <source>
        <strain>ATCC 25586 / DSM 15643 / BCRC 10681 / CIP 101130 / JCM 8532 / KCTC 2640 / LMG 13131 / VPI 4355</strain>
    </source>
</reference>
<name>PUR2_FUSNN</name>
<proteinExistence type="inferred from homology"/>
<accession>Q8REV7</accession>
<gene>
    <name evidence="2" type="primary">purD</name>
    <name type="ordered locus">FN0981</name>
</gene>
<feature type="chain" id="PRO_0000151451" description="Phosphoribosylamine--glycine ligase">
    <location>
        <begin position="1"/>
        <end position="426"/>
    </location>
</feature>
<feature type="domain" description="ATP-grasp" evidence="2">
    <location>
        <begin position="107"/>
        <end position="313"/>
    </location>
</feature>
<feature type="binding site" evidence="2">
    <location>
        <begin position="133"/>
        <end position="194"/>
    </location>
    <ligand>
        <name>ATP</name>
        <dbReference type="ChEBI" id="CHEBI:30616"/>
    </ligand>
</feature>
<feature type="binding site" evidence="2">
    <location>
        <position position="283"/>
    </location>
    <ligand>
        <name>Mg(2+)</name>
        <dbReference type="ChEBI" id="CHEBI:18420"/>
    </ligand>
</feature>
<feature type="binding site" evidence="2">
    <location>
        <position position="285"/>
    </location>
    <ligand>
        <name>Mg(2+)</name>
        <dbReference type="ChEBI" id="CHEBI:18420"/>
    </ligand>
</feature>
<comment type="catalytic activity">
    <reaction evidence="2">
        <text>5-phospho-beta-D-ribosylamine + glycine + ATP = N(1)-(5-phospho-beta-D-ribosyl)glycinamide + ADP + phosphate + H(+)</text>
        <dbReference type="Rhea" id="RHEA:17453"/>
        <dbReference type="ChEBI" id="CHEBI:15378"/>
        <dbReference type="ChEBI" id="CHEBI:30616"/>
        <dbReference type="ChEBI" id="CHEBI:43474"/>
        <dbReference type="ChEBI" id="CHEBI:57305"/>
        <dbReference type="ChEBI" id="CHEBI:58681"/>
        <dbReference type="ChEBI" id="CHEBI:143788"/>
        <dbReference type="ChEBI" id="CHEBI:456216"/>
        <dbReference type="EC" id="6.3.4.13"/>
    </reaction>
</comment>
<comment type="cofactor">
    <cofactor evidence="1">
        <name>Mg(2+)</name>
        <dbReference type="ChEBI" id="CHEBI:18420"/>
    </cofactor>
    <cofactor evidence="1">
        <name>Mn(2+)</name>
        <dbReference type="ChEBI" id="CHEBI:29035"/>
    </cofactor>
    <text evidence="1">Binds 1 Mg(2+) or Mn(2+) ion per subunit.</text>
</comment>
<comment type="pathway">
    <text evidence="2">Purine metabolism; IMP biosynthesis via de novo pathway; N(1)-(5-phospho-D-ribosyl)glycinamide from 5-phospho-alpha-D-ribose 1-diphosphate: step 2/2.</text>
</comment>
<comment type="similarity">
    <text evidence="2">Belongs to the GARS family.</text>
</comment>
<keyword id="KW-0067">ATP-binding</keyword>
<keyword id="KW-0436">Ligase</keyword>
<keyword id="KW-0460">Magnesium</keyword>
<keyword id="KW-0464">Manganese</keyword>
<keyword id="KW-0479">Metal-binding</keyword>
<keyword id="KW-0547">Nucleotide-binding</keyword>
<keyword id="KW-0658">Purine biosynthesis</keyword>
<keyword id="KW-1185">Reference proteome</keyword>
<dbReference type="EC" id="6.3.4.13" evidence="2"/>
<dbReference type="EMBL" id="AE009951">
    <property type="protein sequence ID" value="AAL95177.1"/>
    <property type="molecule type" value="Genomic_DNA"/>
</dbReference>
<dbReference type="RefSeq" id="NP_603878.1">
    <property type="nucleotide sequence ID" value="NC_003454.1"/>
</dbReference>
<dbReference type="RefSeq" id="WP_011016802.1">
    <property type="nucleotide sequence ID" value="NZ_OZ209243.1"/>
</dbReference>
<dbReference type="SMR" id="Q8REV7"/>
<dbReference type="FunCoup" id="Q8REV7">
    <property type="interactions" value="309"/>
</dbReference>
<dbReference type="STRING" id="190304.FN0981"/>
<dbReference type="PaxDb" id="190304-FN0981"/>
<dbReference type="EnsemblBacteria" id="AAL95177">
    <property type="protein sequence ID" value="AAL95177"/>
    <property type="gene ID" value="FN0981"/>
</dbReference>
<dbReference type="GeneID" id="79783964"/>
<dbReference type="KEGG" id="fnu:FN0981"/>
<dbReference type="PATRIC" id="fig|190304.8.peg.1546"/>
<dbReference type="eggNOG" id="COG0151">
    <property type="taxonomic scope" value="Bacteria"/>
</dbReference>
<dbReference type="HOGENOM" id="CLU_027420_3_1_0"/>
<dbReference type="InParanoid" id="Q8REV7"/>
<dbReference type="BioCyc" id="FNUC190304:G1FZS-1563-MONOMER"/>
<dbReference type="UniPathway" id="UPA00074">
    <property type="reaction ID" value="UER00125"/>
</dbReference>
<dbReference type="Proteomes" id="UP000002521">
    <property type="component" value="Chromosome"/>
</dbReference>
<dbReference type="GO" id="GO:0005524">
    <property type="term" value="F:ATP binding"/>
    <property type="evidence" value="ECO:0007669"/>
    <property type="project" value="UniProtKB-KW"/>
</dbReference>
<dbReference type="GO" id="GO:0046872">
    <property type="term" value="F:metal ion binding"/>
    <property type="evidence" value="ECO:0007669"/>
    <property type="project" value="UniProtKB-KW"/>
</dbReference>
<dbReference type="GO" id="GO:0004637">
    <property type="term" value="F:phosphoribosylamine-glycine ligase activity"/>
    <property type="evidence" value="ECO:0007669"/>
    <property type="project" value="UniProtKB-UniRule"/>
</dbReference>
<dbReference type="GO" id="GO:0006189">
    <property type="term" value="P:'de novo' IMP biosynthetic process"/>
    <property type="evidence" value="ECO:0007669"/>
    <property type="project" value="UniProtKB-UniRule"/>
</dbReference>
<dbReference type="GO" id="GO:0009113">
    <property type="term" value="P:purine nucleobase biosynthetic process"/>
    <property type="evidence" value="ECO:0007669"/>
    <property type="project" value="InterPro"/>
</dbReference>
<dbReference type="FunFam" id="3.30.1490.20:FF:000006">
    <property type="entry name" value="phosphoribosylamine--glycine ligase, chloroplastic-like"/>
    <property type="match status" value="1"/>
</dbReference>
<dbReference type="FunFam" id="3.90.600.10:FF:000001">
    <property type="entry name" value="Trifunctional purine biosynthetic protein adenosine-3"/>
    <property type="match status" value="1"/>
</dbReference>
<dbReference type="Gene3D" id="3.40.50.20">
    <property type="match status" value="1"/>
</dbReference>
<dbReference type="Gene3D" id="3.30.1490.20">
    <property type="entry name" value="ATP-grasp fold, A domain"/>
    <property type="match status" value="1"/>
</dbReference>
<dbReference type="Gene3D" id="3.30.470.20">
    <property type="entry name" value="ATP-grasp fold, B domain"/>
    <property type="match status" value="1"/>
</dbReference>
<dbReference type="Gene3D" id="3.90.600.10">
    <property type="entry name" value="Phosphoribosylglycinamide synthetase, C-terminal domain"/>
    <property type="match status" value="1"/>
</dbReference>
<dbReference type="HAMAP" id="MF_00138">
    <property type="entry name" value="GARS"/>
    <property type="match status" value="1"/>
</dbReference>
<dbReference type="InterPro" id="IPR011761">
    <property type="entry name" value="ATP-grasp"/>
</dbReference>
<dbReference type="InterPro" id="IPR013815">
    <property type="entry name" value="ATP_grasp_subdomain_1"/>
</dbReference>
<dbReference type="InterPro" id="IPR016185">
    <property type="entry name" value="PreATP-grasp_dom_sf"/>
</dbReference>
<dbReference type="InterPro" id="IPR020561">
    <property type="entry name" value="PRibGlycinamid_synth_ATP-grasp"/>
</dbReference>
<dbReference type="InterPro" id="IPR000115">
    <property type="entry name" value="PRibGlycinamide_synth"/>
</dbReference>
<dbReference type="InterPro" id="IPR020560">
    <property type="entry name" value="PRibGlycinamide_synth_C-dom"/>
</dbReference>
<dbReference type="InterPro" id="IPR037123">
    <property type="entry name" value="PRibGlycinamide_synth_C_sf"/>
</dbReference>
<dbReference type="InterPro" id="IPR020562">
    <property type="entry name" value="PRibGlycinamide_synth_N"/>
</dbReference>
<dbReference type="InterPro" id="IPR011054">
    <property type="entry name" value="Rudment_hybrid_motif"/>
</dbReference>
<dbReference type="NCBIfam" id="TIGR00877">
    <property type="entry name" value="purD"/>
    <property type="match status" value="1"/>
</dbReference>
<dbReference type="PANTHER" id="PTHR43472">
    <property type="entry name" value="PHOSPHORIBOSYLAMINE--GLYCINE LIGASE"/>
    <property type="match status" value="1"/>
</dbReference>
<dbReference type="PANTHER" id="PTHR43472:SF1">
    <property type="entry name" value="PHOSPHORIBOSYLAMINE--GLYCINE LIGASE, CHLOROPLASTIC"/>
    <property type="match status" value="1"/>
</dbReference>
<dbReference type="Pfam" id="PF01071">
    <property type="entry name" value="GARS_A"/>
    <property type="match status" value="1"/>
</dbReference>
<dbReference type="Pfam" id="PF02843">
    <property type="entry name" value="GARS_C"/>
    <property type="match status" value="1"/>
</dbReference>
<dbReference type="Pfam" id="PF02844">
    <property type="entry name" value="GARS_N"/>
    <property type="match status" value="1"/>
</dbReference>
<dbReference type="SMART" id="SM01209">
    <property type="entry name" value="GARS_A"/>
    <property type="match status" value="1"/>
</dbReference>
<dbReference type="SMART" id="SM01210">
    <property type="entry name" value="GARS_C"/>
    <property type="match status" value="1"/>
</dbReference>
<dbReference type="SUPFAM" id="SSF56059">
    <property type="entry name" value="Glutathione synthetase ATP-binding domain-like"/>
    <property type="match status" value="1"/>
</dbReference>
<dbReference type="SUPFAM" id="SSF52440">
    <property type="entry name" value="PreATP-grasp domain"/>
    <property type="match status" value="1"/>
</dbReference>
<dbReference type="SUPFAM" id="SSF51246">
    <property type="entry name" value="Rudiment single hybrid motif"/>
    <property type="match status" value="1"/>
</dbReference>
<dbReference type="PROSITE" id="PS50975">
    <property type="entry name" value="ATP_GRASP"/>
    <property type="match status" value="1"/>
</dbReference>
<organism>
    <name type="scientific">Fusobacterium nucleatum subsp. nucleatum (strain ATCC 25586 / DSM 15643 / BCRC 10681 / CIP 101130 / JCM 8532 / KCTC 2640 / LMG 13131 / VPI 4355)</name>
    <dbReference type="NCBI Taxonomy" id="190304"/>
    <lineage>
        <taxon>Bacteria</taxon>
        <taxon>Fusobacteriati</taxon>
        <taxon>Fusobacteriota</taxon>
        <taxon>Fusobacteriia</taxon>
        <taxon>Fusobacteriales</taxon>
        <taxon>Fusobacteriaceae</taxon>
        <taxon>Fusobacterium</taxon>
    </lineage>
</organism>
<protein>
    <recommendedName>
        <fullName evidence="2">Phosphoribosylamine--glycine ligase</fullName>
        <ecNumber evidence="2">6.3.4.13</ecNumber>
    </recommendedName>
    <alternativeName>
        <fullName evidence="2">GARS</fullName>
    </alternativeName>
    <alternativeName>
        <fullName evidence="2">Glycinamide ribonucleotide synthetase</fullName>
    </alternativeName>
    <alternativeName>
        <fullName evidence="2">Phosphoribosylglycinamide synthetase</fullName>
    </alternativeName>
</protein>